<keyword id="KW-1185">Reference proteome</keyword>
<keyword id="KW-0687">Ribonucleoprotein</keyword>
<keyword id="KW-0689">Ribosomal protein</keyword>
<keyword id="KW-0694">RNA-binding</keyword>
<keyword id="KW-0699">rRNA-binding</keyword>
<evidence type="ECO:0000255" key="1">
    <source>
        <dbReference type="HAMAP-Rule" id="MF_00500"/>
    </source>
</evidence>
<evidence type="ECO:0000256" key="2">
    <source>
        <dbReference type="SAM" id="MobiDB-lite"/>
    </source>
</evidence>
<evidence type="ECO:0000305" key="3"/>
<name>RS20_CORA7</name>
<comment type="function">
    <text evidence="1">Binds directly to 16S ribosomal RNA.</text>
</comment>
<comment type="similarity">
    <text evidence="1">Belongs to the bacterial ribosomal protein bS20 family.</text>
</comment>
<protein>
    <recommendedName>
        <fullName evidence="1">Small ribosomal subunit protein bS20</fullName>
    </recommendedName>
    <alternativeName>
        <fullName evidence="3">30S ribosomal protein S20</fullName>
    </alternativeName>
</protein>
<gene>
    <name evidence="1" type="primary">rpsT</name>
    <name type="ordered locus">cauri_1844</name>
</gene>
<accession>C3PHY3</accession>
<feature type="chain" id="PRO_1000194237" description="Small ribosomal subunit protein bS20">
    <location>
        <begin position="1"/>
        <end position="87"/>
    </location>
</feature>
<feature type="region of interest" description="Disordered" evidence="2">
    <location>
        <begin position="1"/>
        <end position="27"/>
    </location>
</feature>
<feature type="compositionally biased region" description="Basic residues" evidence="2">
    <location>
        <begin position="1"/>
        <end position="10"/>
    </location>
</feature>
<reference key="1">
    <citation type="journal article" date="2010" name="BMC Genomics">
        <title>Complete genome sequence and lifestyle of black-pigmented Corynebacterium aurimucosum ATCC 700975 (formerly C. nigricans CN-1) isolated from a vaginal swab of a woman with spontaneous abortion.</title>
        <authorList>
            <person name="Trost E."/>
            <person name="Gotker S."/>
            <person name="Schneider J."/>
            <person name="Schneiker-Bekel S."/>
            <person name="Szczepanowski R."/>
            <person name="Tilker A."/>
            <person name="Viehoever P."/>
            <person name="Arnold W."/>
            <person name="Bekel T."/>
            <person name="Blom J."/>
            <person name="Gartemann K.H."/>
            <person name="Linke B."/>
            <person name="Goesmann A."/>
            <person name="Puhler A."/>
            <person name="Shukla S.K."/>
            <person name="Tauch A."/>
        </authorList>
    </citation>
    <scope>NUCLEOTIDE SEQUENCE [LARGE SCALE GENOMIC DNA]</scope>
    <source>
        <strain>ATCC 700975 / DSM 44827 / CIP 107346 / CN-1</strain>
    </source>
</reference>
<proteinExistence type="inferred from homology"/>
<organism>
    <name type="scientific">Corynebacterium aurimucosum (strain ATCC 700975 / DSM 44827 / CIP 107346 / CN-1)</name>
    <name type="common">Corynebacterium nigricans</name>
    <dbReference type="NCBI Taxonomy" id="548476"/>
    <lineage>
        <taxon>Bacteria</taxon>
        <taxon>Bacillati</taxon>
        <taxon>Actinomycetota</taxon>
        <taxon>Actinomycetes</taxon>
        <taxon>Mycobacteriales</taxon>
        <taxon>Corynebacteriaceae</taxon>
        <taxon>Corynebacterium</taxon>
    </lineage>
</organism>
<sequence>MANIKSKQKRILTNEKSRQRNKSVRSAVRTEIRKFREAVAAGDKAAAEKQLRVASRALDKSVSKGVFHRNTAANKKSGMATAFNKMA</sequence>
<dbReference type="EMBL" id="CP001601">
    <property type="protein sequence ID" value="ACP33437.1"/>
    <property type="molecule type" value="Genomic_DNA"/>
</dbReference>
<dbReference type="RefSeq" id="WP_010190855.1">
    <property type="nucleotide sequence ID" value="NZ_ACLH01000093.1"/>
</dbReference>
<dbReference type="SMR" id="C3PHY3"/>
<dbReference type="STRING" id="548476.cauri_1844"/>
<dbReference type="GeneID" id="31924478"/>
<dbReference type="KEGG" id="car:cauri_1844"/>
<dbReference type="eggNOG" id="COG0268">
    <property type="taxonomic scope" value="Bacteria"/>
</dbReference>
<dbReference type="HOGENOM" id="CLU_160655_0_1_11"/>
<dbReference type="OrthoDB" id="9807974at2"/>
<dbReference type="Proteomes" id="UP000002077">
    <property type="component" value="Chromosome"/>
</dbReference>
<dbReference type="GO" id="GO:0005829">
    <property type="term" value="C:cytosol"/>
    <property type="evidence" value="ECO:0007669"/>
    <property type="project" value="TreeGrafter"/>
</dbReference>
<dbReference type="GO" id="GO:0015935">
    <property type="term" value="C:small ribosomal subunit"/>
    <property type="evidence" value="ECO:0007669"/>
    <property type="project" value="TreeGrafter"/>
</dbReference>
<dbReference type="GO" id="GO:0070181">
    <property type="term" value="F:small ribosomal subunit rRNA binding"/>
    <property type="evidence" value="ECO:0007669"/>
    <property type="project" value="TreeGrafter"/>
</dbReference>
<dbReference type="GO" id="GO:0003735">
    <property type="term" value="F:structural constituent of ribosome"/>
    <property type="evidence" value="ECO:0007669"/>
    <property type="project" value="InterPro"/>
</dbReference>
<dbReference type="GO" id="GO:0006412">
    <property type="term" value="P:translation"/>
    <property type="evidence" value="ECO:0007669"/>
    <property type="project" value="UniProtKB-UniRule"/>
</dbReference>
<dbReference type="FunFam" id="1.20.58.110:FF:000001">
    <property type="entry name" value="30S ribosomal protein S20"/>
    <property type="match status" value="1"/>
</dbReference>
<dbReference type="Gene3D" id="1.20.58.110">
    <property type="entry name" value="Ribosomal protein S20"/>
    <property type="match status" value="1"/>
</dbReference>
<dbReference type="HAMAP" id="MF_00500">
    <property type="entry name" value="Ribosomal_bS20"/>
    <property type="match status" value="1"/>
</dbReference>
<dbReference type="InterPro" id="IPR002583">
    <property type="entry name" value="Ribosomal_bS20"/>
</dbReference>
<dbReference type="InterPro" id="IPR036510">
    <property type="entry name" value="Ribosomal_bS20_sf"/>
</dbReference>
<dbReference type="NCBIfam" id="TIGR00029">
    <property type="entry name" value="S20"/>
    <property type="match status" value="1"/>
</dbReference>
<dbReference type="PANTHER" id="PTHR33398">
    <property type="entry name" value="30S RIBOSOMAL PROTEIN S20"/>
    <property type="match status" value="1"/>
</dbReference>
<dbReference type="PANTHER" id="PTHR33398:SF1">
    <property type="entry name" value="SMALL RIBOSOMAL SUBUNIT PROTEIN BS20C"/>
    <property type="match status" value="1"/>
</dbReference>
<dbReference type="Pfam" id="PF01649">
    <property type="entry name" value="Ribosomal_S20p"/>
    <property type="match status" value="1"/>
</dbReference>
<dbReference type="SUPFAM" id="SSF46992">
    <property type="entry name" value="Ribosomal protein S20"/>
    <property type="match status" value="1"/>
</dbReference>